<sequence>MTDTPVEESLFQIIHCFHQYAARQGDMETLSLQELQALLMDNMPRFMDSLGRKEPYYITELFQAADKNKDNQICFDEFLYILGKLVKDYHLQYHRQLCARYCAQHSLY</sequence>
<name>S115A_PONAB</name>
<accession>A7K6Y9</accession>
<comment type="similarity">
    <text evidence="2">Belongs to the S-100 family.</text>
</comment>
<reference key="1">
    <citation type="journal article" date="2007" name="Mol. Biol. Evol.">
        <title>Inactivation of MOXD2 and S100A15A by exon deletion during human evolution.</title>
        <authorList>
            <person name="Hahn Y."/>
            <person name="Jeong S."/>
            <person name="Lee B."/>
        </authorList>
    </citation>
    <scope>NUCLEOTIDE SEQUENCE [GENOMIC DNA]</scope>
</reference>
<evidence type="ECO:0000255" key="1">
    <source>
        <dbReference type="PROSITE-ProRule" id="PRU00448"/>
    </source>
</evidence>
<evidence type="ECO:0000305" key="2"/>
<keyword id="KW-0106">Calcium</keyword>
<keyword id="KW-0479">Metal-binding</keyword>
<keyword id="KW-1185">Reference proteome</keyword>
<keyword id="KW-0862">Zinc</keyword>
<protein>
    <recommendedName>
        <fullName>Protein S100-A15A</fullName>
    </recommendedName>
    <alternativeName>
        <fullName>S100 calcium-binding protein A15A</fullName>
    </alternativeName>
</protein>
<organism>
    <name type="scientific">Pongo abelii</name>
    <name type="common">Sumatran orangutan</name>
    <name type="synonym">Pongo pygmaeus abelii</name>
    <dbReference type="NCBI Taxonomy" id="9601"/>
    <lineage>
        <taxon>Eukaryota</taxon>
        <taxon>Metazoa</taxon>
        <taxon>Chordata</taxon>
        <taxon>Craniata</taxon>
        <taxon>Vertebrata</taxon>
        <taxon>Euteleostomi</taxon>
        <taxon>Mammalia</taxon>
        <taxon>Eutheria</taxon>
        <taxon>Euarchontoglires</taxon>
        <taxon>Primates</taxon>
        <taxon>Haplorrhini</taxon>
        <taxon>Catarrhini</taxon>
        <taxon>Hominidae</taxon>
        <taxon>Pongo</taxon>
    </lineage>
</organism>
<gene>
    <name type="primary">S100A15A</name>
</gene>
<dbReference type="EMBL" id="EF044238">
    <property type="protein sequence ID" value="ABO30562.1"/>
    <property type="molecule type" value="Genomic_DNA"/>
</dbReference>
<dbReference type="RefSeq" id="NP_001129008.1">
    <property type="nucleotide sequence ID" value="NM_001135536.1"/>
</dbReference>
<dbReference type="SMR" id="A7K6Y9"/>
<dbReference type="GeneID" id="100190848"/>
<dbReference type="KEGG" id="pon:100190848"/>
<dbReference type="CTD" id="112488748"/>
<dbReference type="eggNOG" id="ENOG502SXYF">
    <property type="taxonomic scope" value="Eukaryota"/>
</dbReference>
<dbReference type="InParanoid" id="A7K6Y9"/>
<dbReference type="OrthoDB" id="9648995at2759"/>
<dbReference type="Proteomes" id="UP000001595">
    <property type="component" value="Unplaced"/>
</dbReference>
<dbReference type="GO" id="GO:0005737">
    <property type="term" value="C:cytoplasm"/>
    <property type="evidence" value="ECO:0007669"/>
    <property type="project" value="TreeGrafter"/>
</dbReference>
<dbReference type="GO" id="GO:0070062">
    <property type="term" value="C:extracellular exosome"/>
    <property type="evidence" value="ECO:0007669"/>
    <property type="project" value="TreeGrafter"/>
</dbReference>
<dbReference type="GO" id="GO:0005509">
    <property type="term" value="F:calcium ion binding"/>
    <property type="evidence" value="ECO:0007669"/>
    <property type="project" value="InterPro"/>
</dbReference>
<dbReference type="GO" id="GO:0048306">
    <property type="term" value="F:calcium-dependent protein binding"/>
    <property type="evidence" value="ECO:0007669"/>
    <property type="project" value="TreeGrafter"/>
</dbReference>
<dbReference type="GO" id="GO:0042056">
    <property type="term" value="F:chemoattractant activity"/>
    <property type="evidence" value="ECO:0007669"/>
    <property type="project" value="TreeGrafter"/>
</dbReference>
<dbReference type="GO" id="GO:0046914">
    <property type="term" value="F:transition metal ion binding"/>
    <property type="evidence" value="ECO:0007669"/>
    <property type="project" value="InterPro"/>
</dbReference>
<dbReference type="GO" id="GO:0043542">
    <property type="term" value="P:endothelial cell migration"/>
    <property type="evidence" value="ECO:0007669"/>
    <property type="project" value="TreeGrafter"/>
</dbReference>
<dbReference type="CDD" id="cd00213">
    <property type="entry name" value="S-100"/>
    <property type="match status" value="1"/>
</dbReference>
<dbReference type="Gene3D" id="1.10.238.10">
    <property type="entry name" value="EF-hand"/>
    <property type="match status" value="1"/>
</dbReference>
<dbReference type="InterPro" id="IPR011992">
    <property type="entry name" value="EF-hand-dom_pair"/>
</dbReference>
<dbReference type="InterPro" id="IPR018247">
    <property type="entry name" value="EF_Hand_1_Ca_BS"/>
</dbReference>
<dbReference type="InterPro" id="IPR002048">
    <property type="entry name" value="EF_hand_dom"/>
</dbReference>
<dbReference type="InterPro" id="IPR034325">
    <property type="entry name" value="S-100_dom"/>
</dbReference>
<dbReference type="InterPro" id="IPR013787">
    <property type="entry name" value="S100_Ca-bd_sub"/>
</dbReference>
<dbReference type="PANTHER" id="PTHR11639:SF29">
    <property type="entry name" value="PROTEIN S100-A15A"/>
    <property type="match status" value="1"/>
</dbReference>
<dbReference type="PANTHER" id="PTHR11639">
    <property type="entry name" value="S100 CALCIUM-BINDING PROTEIN"/>
    <property type="match status" value="1"/>
</dbReference>
<dbReference type="Pfam" id="PF01023">
    <property type="entry name" value="S_100"/>
    <property type="match status" value="1"/>
</dbReference>
<dbReference type="SMART" id="SM00054">
    <property type="entry name" value="EFh"/>
    <property type="match status" value="1"/>
</dbReference>
<dbReference type="SMART" id="SM01394">
    <property type="entry name" value="S_100"/>
    <property type="match status" value="1"/>
</dbReference>
<dbReference type="SUPFAM" id="SSF47473">
    <property type="entry name" value="EF-hand"/>
    <property type="match status" value="1"/>
</dbReference>
<dbReference type="PROSITE" id="PS00018">
    <property type="entry name" value="EF_HAND_1"/>
    <property type="match status" value="1"/>
</dbReference>
<dbReference type="PROSITE" id="PS50222">
    <property type="entry name" value="EF_HAND_2"/>
    <property type="match status" value="1"/>
</dbReference>
<feature type="chain" id="PRO_0000320089" description="Protein S100-A15A">
    <location>
        <begin position="1"/>
        <end position="108"/>
    </location>
</feature>
<feature type="domain" description="EF-hand" evidence="1">
    <location>
        <begin position="53"/>
        <end position="88"/>
    </location>
</feature>
<feature type="binding site" evidence="1">
    <location>
        <position position="66"/>
    </location>
    <ligand>
        <name>Ca(2+)</name>
        <dbReference type="ChEBI" id="CHEBI:29108"/>
        <note>high affinity</note>
    </ligand>
</feature>
<feature type="binding site" evidence="1">
    <location>
        <position position="68"/>
    </location>
    <ligand>
        <name>Ca(2+)</name>
        <dbReference type="ChEBI" id="CHEBI:29108"/>
        <note>high affinity</note>
    </ligand>
</feature>
<feature type="binding site" evidence="1">
    <location>
        <position position="70"/>
    </location>
    <ligand>
        <name>Ca(2+)</name>
        <dbReference type="ChEBI" id="CHEBI:29108"/>
        <note>high affinity</note>
    </ligand>
</feature>
<feature type="binding site" evidence="1">
    <location>
        <position position="72"/>
    </location>
    <ligand>
        <name>Ca(2+)</name>
        <dbReference type="ChEBI" id="CHEBI:29108"/>
        <note>high affinity</note>
    </ligand>
</feature>
<feature type="binding site" evidence="1">
    <location>
        <position position="77"/>
    </location>
    <ligand>
        <name>Ca(2+)</name>
        <dbReference type="ChEBI" id="CHEBI:29108"/>
        <note>high affinity</note>
    </ligand>
</feature>
<proteinExistence type="inferred from homology"/>